<protein>
    <recommendedName>
        <fullName>Lysosome membrane protein 2-C</fullName>
    </recommendedName>
    <alternativeName>
        <fullName>Lysosome membrane protein II-3</fullName>
        <shortName>LIMP II-3</shortName>
    </alternativeName>
</protein>
<evidence type="ECO:0000250" key="1"/>
<evidence type="ECO:0000255" key="2"/>
<evidence type="ECO:0000269" key="3">
    <source>
    </source>
</evidence>
<evidence type="ECO:0000305" key="4"/>
<name>LMPC_DICDI</name>
<sequence length="782" mass="87876">MVANNKGLLIAGLLLSVIGAALFVISLALLPSVLNVATNNAIVDAVIVDSFKSQRYNDWAGQKSVDNYFKQYYYLWNLTNPNEVLNGKNCNFEKIGPFNYKYEWNNSKVSFSDDGNLINYIQSKSYKWIEGEDSLNPFTVSTTNFNPAYLGLLSTLSKNSITLGMTAEDLLYTLASAPQTKQFLEYLSSDNFTMIAYFYNGPKYFNQQYQLLLSTINNNLTTTPTIYFLEQWSNSTIIPTNGNSSLWDNMLISYGLDSPSGISLQSALEILNPMNQYSLLNSTNGISYWINAVFNGPNSNSYQILEQELGINQAQLTLVMIWWLKGFNDQYTMSQLLKQCEIESIELLGVCQFITTIPLGYKSISQFNITNLPWLEPIEIPIAMGTNLTISTNEAQSNLFNDSIDDSLLTIHGLGLFLEQMSTNSNNFTKWNLTNNDAMTMIGYFLSYIPNTTGYSIKSVQSFYNTSGLIVTRTANEWLWDCQDDLLDYLGIDQQCSFQQNNTIFKPSTVYTGKKDLSLTNQYQQFQEQSTLTIWNGTVNVTGFVENGQMAPLVQDNLPQSLTIFEENILRPLSLVHSSSSSVMGVSTQRYYLPNQSFPIDPVFNNSINGFANLTGLFNGVPIYVSLWDMYGVPIEYSSLYINGLNQTYENAEIPLDLEPITGNTLYYNLKLQINLQIPSNANSLWFSSLGNWTNIFSPTNSNSFGIFYPSLKIGQTATASTNDINLLKQQFKQIQTVKIAPVVVVSIFGGILLIAGLVMAINGFRKTFYNNNQYNGYNIIN</sequence>
<dbReference type="EMBL" id="AF238325">
    <property type="protein sequence ID" value="AAK30041.1"/>
    <property type="molecule type" value="mRNA"/>
</dbReference>
<dbReference type="EMBL" id="AAFI02000003">
    <property type="protein sequence ID" value="EAL73172.1"/>
    <property type="molecule type" value="Genomic_DNA"/>
</dbReference>
<dbReference type="RefSeq" id="XP_647474.1">
    <property type="nucleotide sequence ID" value="XM_642382.1"/>
</dbReference>
<dbReference type="FunCoup" id="Q55FQ9">
    <property type="interactions" value="1"/>
</dbReference>
<dbReference type="STRING" id="44689.Q55FQ9"/>
<dbReference type="GlyCosmos" id="Q55FQ9">
    <property type="glycosylation" value="22 sites, No reported glycans"/>
</dbReference>
<dbReference type="GlyGen" id="Q55FQ9">
    <property type="glycosylation" value="22 sites"/>
</dbReference>
<dbReference type="PaxDb" id="44689-DDB0191198"/>
<dbReference type="ABCD" id="Q55FQ9">
    <property type="antibodies" value="4 sequenced antibodies"/>
</dbReference>
<dbReference type="EnsemblProtists" id="EAL73172">
    <property type="protein sequence ID" value="EAL73172"/>
    <property type="gene ID" value="DDB_G0267440"/>
</dbReference>
<dbReference type="GeneID" id="8616281"/>
<dbReference type="KEGG" id="ddi:DDB_G0267440"/>
<dbReference type="dictyBase" id="DDB_G0267440">
    <property type="gene designation" value="lmpC"/>
</dbReference>
<dbReference type="VEuPathDB" id="AmoebaDB:DDB_G0267440"/>
<dbReference type="eggNOG" id="KOG3776">
    <property type="taxonomic scope" value="Eukaryota"/>
</dbReference>
<dbReference type="HOGENOM" id="CLU_358414_0_0_1"/>
<dbReference type="InParanoid" id="Q55FQ9"/>
<dbReference type="OMA" id="NNTIFKP"/>
<dbReference type="PhylomeDB" id="Q55FQ9"/>
<dbReference type="Reactome" id="R-DDI-114608">
    <property type="pathway name" value="Platelet degranulation"/>
</dbReference>
<dbReference type="Reactome" id="R-DDI-434313">
    <property type="pathway name" value="Intracellular metabolism of fatty acids regulates insulin secretion"/>
</dbReference>
<dbReference type="Reactome" id="R-DDI-6798695">
    <property type="pathway name" value="Neutrophil degranulation"/>
</dbReference>
<dbReference type="Reactome" id="R-DDI-8856825">
    <property type="pathway name" value="Cargo recognition for clathrin-mediated endocytosis"/>
</dbReference>
<dbReference type="Reactome" id="R-DDI-8856828">
    <property type="pathway name" value="Clathrin-mediated endocytosis"/>
</dbReference>
<dbReference type="PRO" id="PR:Q55FQ9"/>
<dbReference type="Proteomes" id="UP000002195">
    <property type="component" value="Chromosome 1"/>
</dbReference>
<dbReference type="GO" id="GO:0030659">
    <property type="term" value="C:cytoplasmic vesicle membrane"/>
    <property type="evidence" value="ECO:0000314"/>
    <property type="project" value="dictyBase"/>
</dbReference>
<dbReference type="GO" id="GO:0005765">
    <property type="term" value="C:lysosomal membrane"/>
    <property type="evidence" value="ECO:0007669"/>
    <property type="project" value="UniProtKB-SubCell"/>
</dbReference>
<dbReference type="GO" id="GO:0005764">
    <property type="term" value="C:lysosome"/>
    <property type="evidence" value="ECO:0007005"/>
    <property type="project" value="dictyBase"/>
</dbReference>
<dbReference type="GO" id="GO:0045335">
    <property type="term" value="C:phagocytic vesicle"/>
    <property type="evidence" value="ECO:0000314"/>
    <property type="project" value="dictyBase"/>
</dbReference>
<dbReference type="GO" id="GO:0032010">
    <property type="term" value="C:phagolysosome"/>
    <property type="evidence" value="ECO:0007005"/>
    <property type="project" value="dictyBase"/>
</dbReference>
<dbReference type="GO" id="GO:0012506">
    <property type="term" value="C:vesicle membrane"/>
    <property type="evidence" value="ECO:0000318"/>
    <property type="project" value="GO_Central"/>
</dbReference>
<dbReference type="GO" id="GO:0005044">
    <property type="term" value="F:scavenger receptor activity"/>
    <property type="evidence" value="ECO:0000318"/>
    <property type="project" value="GO_Central"/>
</dbReference>
<dbReference type="GO" id="GO:0006911">
    <property type="term" value="P:phagocytosis, engulfment"/>
    <property type="evidence" value="ECO:0000318"/>
    <property type="project" value="GO_Central"/>
</dbReference>
<dbReference type="InterPro" id="IPR002159">
    <property type="entry name" value="CD36_fam"/>
</dbReference>
<dbReference type="PANTHER" id="PTHR11923:SF51">
    <property type="entry name" value="LYSOSOME MEMBRANE PROTEIN 2"/>
    <property type="match status" value="1"/>
</dbReference>
<dbReference type="PANTHER" id="PTHR11923">
    <property type="entry name" value="SCAVENGER RECEPTOR CLASS B TYPE-1 SR-B1"/>
    <property type="match status" value="1"/>
</dbReference>
<dbReference type="Pfam" id="PF01130">
    <property type="entry name" value="CD36"/>
    <property type="match status" value="2"/>
</dbReference>
<dbReference type="PRINTS" id="PR01609">
    <property type="entry name" value="CD36FAMILY"/>
</dbReference>
<reference key="1">
    <citation type="journal article" date="2001" name="J. Biol. Chem.">
        <title>Characterization of CD36/LIMPII homologues in Dictyostelium discoideum.</title>
        <authorList>
            <person name="Janssen K.-P."/>
            <person name="Rost R."/>
            <person name="Eichinger L."/>
            <person name="Schleicher M."/>
        </authorList>
    </citation>
    <scope>NUCLEOTIDE SEQUENCE [MRNA]</scope>
    <scope>DEVELOPMENTAL STAGE</scope>
    <scope>SUBCELLULAR LOCATION</scope>
    <scope>GLYCOSYLATION</scope>
    <scope>TOPOLOGY</scope>
    <source>
        <strain>AX4</strain>
    </source>
</reference>
<reference key="2">
    <citation type="journal article" date="2005" name="Nature">
        <title>The genome of the social amoeba Dictyostelium discoideum.</title>
        <authorList>
            <person name="Eichinger L."/>
            <person name="Pachebat J.A."/>
            <person name="Gloeckner G."/>
            <person name="Rajandream M.A."/>
            <person name="Sucgang R."/>
            <person name="Berriman M."/>
            <person name="Song J."/>
            <person name="Olsen R."/>
            <person name="Szafranski K."/>
            <person name="Xu Q."/>
            <person name="Tunggal B."/>
            <person name="Kummerfeld S."/>
            <person name="Madera M."/>
            <person name="Konfortov B.A."/>
            <person name="Rivero F."/>
            <person name="Bankier A.T."/>
            <person name="Lehmann R."/>
            <person name="Hamlin N."/>
            <person name="Davies R."/>
            <person name="Gaudet P."/>
            <person name="Fey P."/>
            <person name="Pilcher K."/>
            <person name="Chen G."/>
            <person name="Saunders D."/>
            <person name="Sodergren E.J."/>
            <person name="Davis P."/>
            <person name="Kerhornou A."/>
            <person name="Nie X."/>
            <person name="Hall N."/>
            <person name="Anjard C."/>
            <person name="Hemphill L."/>
            <person name="Bason N."/>
            <person name="Farbrother P."/>
            <person name="Desany B."/>
            <person name="Just E."/>
            <person name="Morio T."/>
            <person name="Rost R."/>
            <person name="Churcher C.M."/>
            <person name="Cooper J."/>
            <person name="Haydock S."/>
            <person name="van Driessche N."/>
            <person name="Cronin A."/>
            <person name="Goodhead I."/>
            <person name="Muzny D.M."/>
            <person name="Mourier T."/>
            <person name="Pain A."/>
            <person name="Lu M."/>
            <person name="Harper D."/>
            <person name="Lindsay R."/>
            <person name="Hauser H."/>
            <person name="James K.D."/>
            <person name="Quiles M."/>
            <person name="Madan Babu M."/>
            <person name="Saito T."/>
            <person name="Buchrieser C."/>
            <person name="Wardroper A."/>
            <person name="Felder M."/>
            <person name="Thangavelu M."/>
            <person name="Johnson D."/>
            <person name="Knights A."/>
            <person name="Loulseged H."/>
            <person name="Mungall K.L."/>
            <person name="Oliver K."/>
            <person name="Price C."/>
            <person name="Quail M.A."/>
            <person name="Urushihara H."/>
            <person name="Hernandez J."/>
            <person name="Rabbinowitsch E."/>
            <person name="Steffen D."/>
            <person name="Sanders M."/>
            <person name="Ma J."/>
            <person name="Kohara Y."/>
            <person name="Sharp S."/>
            <person name="Simmonds M.N."/>
            <person name="Spiegler S."/>
            <person name="Tivey A."/>
            <person name="Sugano S."/>
            <person name="White B."/>
            <person name="Walker D."/>
            <person name="Woodward J.R."/>
            <person name="Winckler T."/>
            <person name="Tanaka Y."/>
            <person name="Shaulsky G."/>
            <person name="Schleicher M."/>
            <person name="Weinstock G.M."/>
            <person name="Rosenthal A."/>
            <person name="Cox E.C."/>
            <person name="Chisholm R.L."/>
            <person name="Gibbs R.A."/>
            <person name="Loomis W.F."/>
            <person name="Platzer M."/>
            <person name="Kay R.R."/>
            <person name="Williams J.G."/>
            <person name="Dear P.H."/>
            <person name="Noegel A.A."/>
            <person name="Barrell B.G."/>
            <person name="Kuspa A."/>
        </authorList>
    </citation>
    <scope>NUCLEOTIDE SEQUENCE [LARGE SCALE GENOMIC DNA]</scope>
    <source>
        <strain>AX4</strain>
    </source>
</reference>
<feature type="chain" id="PRO_0000327759" description="Lysosome membrane protein 2-C">
    <location>
        <begin position="1"/>
        <end position="782"/>
    </location>
</feature>
<feature type="topological domain" description="Cytoplasmic" evidence="2">
    <location>
        <begin position="1"/>
        <end position="7"/>
    </location>
</feature>
<feature type="transmembrane region" description="Helical" evidence="2">
    <location>
        <begin position="8"/>
        <end position="28"/>
    </location>
</feature>
<feature type="topological domain" description="Lumenal" evidence="2">
    <location>
        <begin position="29"/>
        <end position="739"/>
    </location>
</feature>
<feature type="transmembrane region" description="Helical" evidence="2">
    <location>
        <begin position="740"/>
        <end position="760"/>
    </location>
</feature>
<feature type="topological domain" description="Cytoplasmic" evidence="2">
    <location>
        <begin position="761"/>
        <end position="782"/>
    </location>
</feature>
<feature type="short sequence motif" description="Tyrosine-type lysosomal sorting signal" evidence="2">
    <location>
        <begin position="777"/>
        <end position="781"/>
    </location>
</feature>
<feature type="glycosylation site" description="N-linked (GlcNAc...) asparagine" evidence="2">
    <location>
        <position position="77"/>
    </location>
</feature>
<feature type="glycosylation site" description="N-linked (GlcNAc...) asparagine" evidence="2">
    <location>
        <position position="105"/>
    </location>
</feature>
<feature type="glycosylation site" description="N-linked (GlcNAc...) asparagine" evidence="2">
    <location>
        <position position="191"/>
    </location>
</feature>
<feature type="glycosylation site" description="N-linked (GlcNAc...) asparagine" evidence="2">
    <location>
        <position position="219"/>
    </location>
</feature>
<feature type="glycosylation site" description="N-linked (GlcNAc...) asparagine" evidence="2">
    <location>
        <position position="234"/>
    </location>
</feature>
<feature type="glycosylation site" description="N-linked (GlcNAc...) asparagine" evidence="2">
    <location>
        <position position="243"/>
    </location>
</feature>
<feature type="glycosylation site" description="N-linked (GlcNAc...) asparagine" evidence="2">
    <location>
        <position position="281"/>
    </location>
</feature>
<feature type="glycosylation site" description="N-linked (GlcNAc...) asparagine" evidence="2">
    <location>
        <position position="368"/>
    </location>
</feature>
<feature type="glycosylation site" description="N-linked (GlcNAc...) asparagine" evidence="2">
    <location>
        <position position="387"/>
    </location>
</feature>
<feature type="glycosylation site" description="N-linked (GlcNAc...) asparagine" evidence="2">
    <location>
        <position position="401"/>
    </location>
</feature>
<feature type="glycosylation site" description="N-linked (GlcNAc...) asparagine" evidence="2">
    <location>
        <position position="427"/>
    </location>
</feature>
<feature type="glycosylation site" description="N-linked (GlcNAc...) asparagine" evidence="2">
    <location>
        <position position="432"/>
    </location>
</feature>
<feature type="glycosylation site" description="N-linked (GlcNAc...) asparagine" evidence="2">
    <location>
        <position position="451"/>
    </location>
</feature>
<feature type="glycosylation site" description="N-linked (GlcNAc...) asparagine" evidence="2">
    <location>
        <position position="465"/>
    </location>
</feature>
<feature type="glycosylation site" description="N-linked (GlcNAc...) asparagine" evidence="2">
    <location>
        <position position="501"/>
    </location>
</feature>
<feature type="glycosylation site" description="N-linked (GlcNAc...) asparagine" evidence="2">
    <location>
        <position position="536"/>
    </location>
</feature>
<feature type="glycosylation site" description="N-linked (GlcNAc...) asparagine" evidence="2">
    <location>
        <position position="540"/>
    </location>
</feature>
<feature type="glycosylation site" description="N-linked (GlcNAc...) asparagine" evidence="2">
    <location>
        <position position="595"/>
    </location>
</feature>
<feature type="glycosylation site" description="N-linked (GlcNAc...) asparagine" evidence="2">
    <location>
        <position position="605"/>
    </location>
</feature>
<feature type="glycosylation site" description="N-linked (GlcNAc...) asparagine" evidence="2">
    <location>
        <position position="613"/>
    </location>
</feature>
<feature type="glycosylation site" description="N-linked (GlcNAc...) asparagine" evidence="2">
    <location>
        <position position="646"/>
    </location>
</feature>
<feature type="glycosylation site" description="N-linked (GlcNAc...) asparagine" evidence="2">
    <location>
        <position position="692"/>
    </location>
</feature>
<feature type="sequence conflict" description="In Ref. 1; AAK30041." evidence="4" ref="1">
    <original>N</original>
    <variation>T</variation>
    <location>
        <position position="5"/>
    </location>
</feature>
<proteinExistence type="evidence at protein level"/>
<organism>
    <name type="scientific">Dictyostelium discoideum</name>
    <name type="common">Social amoeba</name>
    <dbReference type="NCBI Taxonomy" id="44689"/>
    <lineage>
        <taxon>Eukaryota</taxon>
        <taxon>Amoebozoa</taxon>
        <taxon>Evosea</taxon>
        <taxon>Eumycetozoa</taxon>
        <taxon>Dictyostelia</taxon>
        <taxon>Dictyosteliales</taxon>
        <taxon>Dictyosteliaceae</taxon>
        <taxon>Dictyostelium</taxon>
    </lineage>
</organism>
<comment type="function">
    <text evidence="1">May act as a lysosomal receptor (By similarity). May be involved role in macropinocytosis and fluid phase exocytosis.</text>
</comment>
<comment type="subcellular location">
    <subcellularLocation>
        <location evidence="4">Lysosome membrane</location>
        <topology evidence="4">Multi-pass membrane protein</topology>
    </subcellularLocation>
    <text evidence="3">Localizes to membranes of endolysosomal vesicles and macropinosomes.</text>
</comment>
<comment type="developmental stage">
    <text evidence="3">Found at all stages of development in comparable quantities (at protein level).</text>
</comment>
<comment type="PTM">
    <text evidence="3">Heavily glycosylated.</text>
</comment>
<comment type="similarity">
    <text evidence="4">Belongs to the CD36 family.</text>
</comment>
<keyword id="KW-0325">Glycoprotein</keyword>
<keyword id="KW-0458">Lysosome</keyword>
<keyword id="KW-0472">Membrane</keyword>
<keyword id="KW-1185">Reference proteome</keyword>
<keyword id="KW-0812">Transmembrane</keyword>
<keyword id="KW-1133">Transmembrane helix</keyword>
<gene>
    <name type="primary">lmpC</name>
    <name type="ORF">DDB_G0267440</name>
</gene>
<accession>Q55FQ9</accession>
<accession>Q9BKJ8</accession>